<gene>
    <name evidence="1" type="primary">minC</name>
    <name type="ordered locus">PP_1734</name>
</gene>
<proteinExistence type="inferred from homology"/>
<protein>
    <recommendedName>
        <fullName evidence="1">Probable septum site-determining protein MinC</fullName>
    </recommendedName>
</protein>
<evidence type="ECO:0000255" key="1">
    <source>
        <dbReference type="HAMAP-Rule" id="MF_00267"/>
    </source>
</evidence>
<evidence type="ECO:0000256" key="2">
    <source>
        <dbReference type="SAM" id="MobiDB-lite"/>
    </source>
</evidence>
<evidence type="ECO:0000305" key="3"/>
<keyword id="KW-0131">Cell cycle</keyword>
<keyword id="KW-0132">Cell division</keyword>
<keyword id="KW-1185">Reference proteome</keyword>
<keyword id="KW-0717">Septation</keyword>
<reference key="1">
    <citation type="journal article" date="2002" name="Environ. Microbiol.">
        <title>Complete genome sequence and comparative analysis of the metabolically versatile Pseudomonas putida KT2440.</title>
        <authorList>
            <person name="Nelson K.E."/>
            <person name="Weinel C."/>
            <person name="Paulsen I.T."/>
            <person name="Dodson R.J."/>
            <person name="Hilbert H."/>
            <person name="Martins dos Santos V.A.P."/>
            <person name="Fouts D.E."/>
            <person name="Gill S.R."/>
            <person name="Pop M."/>
            <person name="Holmes M."/>
            <person name="Brinkac L.M."/>
            <person name="Beanan M.J."/>
            <person name="DeBoy R.T."/>
            <person name="Daugherty S.C."/>
            <person name="Kolonay J.F."/>
            <person name="Madupu R."/>
            <person name="Nelson W.C."/>
            <person name="White O."/>
            <person name="Peterson J.D."/>
            <person name="Khouri H.M."/>
            <person name="Hance I."/>
            <person name="Chris Lee P."/>
            <person name="Holtzapple E.K."/>
            <person name="Scanlan D."/>
            <person name="Tran K."/>
            <person name="Moazzez A."/>
            <person name="Utterback T.R."/>
            <person name="Rizzo M."/>
            <person name="Lee K."/>
            <person name="Kosack D."/>
            <person name="Moestl D."/>
            <person name="Wedler H."/>
            <person name="Lauber J."/>
            <person name="Stjepandic D."/>
            <person name="Hoheisel J."/>
            <person name="Straetz M."/>
            <person name="Heim S."/>
            <person name="Kiewitz C."/>
            <person name="Eisen J.A."/>
            <person name="Timmis K.N."/>
            <person name="Duesterhoeft A."/>
            <person name="Tuemmler B."/>
            <person name="Fraser C.M."/>
        </authorList>
    </citation>
    <scope>NUCLEOTIDE SEQUENCE [LARGE SCALE GENOMIC DNA]</scope>
    <source>
        <strain>ATCC 47054 / DSM 6125 / CFBP 8728 / NCIMB 11950 / KT2440</strain>
    </source>
</reference>
<feature type="chain" id="PRO_0000189055" description="Probable septum site-determining protein MinC">
    <location>
        <begin position="1"/>
        <end position="250"/>
    </location>
</feature>
<feature type="region of interest" description="Disordered" evidence="2">
    <location>
        <begin position="110"/>
        <end position="143"/>
    </location>
</feature>
<feature type="compositionally biased region" description="Basic and acidic residues" evidence="2">
    <location>
        <begin position="112"/>
        <end position="128"/>
    </location>
</feature>
<feature type="compositionally biased region" description="Pro residues" evidence="2">
    <location>
        <begin position="129"/>
        <end position="138"/>
    </location>
</feature>
<organism>
    <name type="scientific">Pseudomonas putida (strain ATCC 47054 / DSM 6125 / CFBP 8728 / NCIMB 11950 / KT2440)</name>
    <dbReference type="NCBI Taxonomy" id="160488"/>
    <lineage>
        <taxon>Bacteria</taxon>
        <taxon>Pseudomonadati</taxon>
        <taxon>Pseudomonadota</taxon>
        <taxon>Gammaproteobacteria</taxon>
        <taxon>Pseudomonadales</taxon>
        <taxon>Pseudomonadaceae</taxon>
        <taxon>Pseudomonas</taxon>
    </lineage>
</organism>
<name>MINC_PSEPK</name>
<accession>Q88M41</accession>
<sequence>MSPNHTPDTASVFQLKGSMLAITVLELARNDLEALDRQLAAKVAQAPNFFSNTPLVLALDKLPADEGAIDLPGLMRICRHHGLRTLAIRANRIEDIAAAIAIDLPVLPPSGARERPLEPEPEVVKKPEPAPAPPPPPEPEVRPTRIITSPVRGGQQIYAQGGDLVVTASVSPGAELLADGNIHVYGAMRGRALAGIKGNTKARIFCQQMTAEMVSIAGQYKVCEDLRRDPLWGTSVQVSLSGDVLNITRL</sequence>
<comment type="function">
    <text evidence="1">Cell division inhibitor that blocks the formation of polar Z ring septums. Rapidly oscillates between the poles of the cell to destabilize FtsZ filaments that have formed before they mature into polar Z rings. Prevents FtsZ polymerization.</text>
</comment>
<comment type="subunit">
    <text evidence="1">Interacts with MinD and FtsZ.</text>
</comment>
<comment type="similarity">
    <text evidence="1">Belongs to the MinC family.</text>
</comment>
<comment type="sequence caution" evidence="3">
    <conflict type="erroneous initiation">
        <sequence resource="EMBL-CDS" id="AAN67354"/>
    </conflict>
</comment>
<dbReference type="EMBL" id="AE015451">
    <property type="protein sequence ID" value="AAN67354.1"/>
    <property type="status" value="ALT_INIT"/>
    <property type="molecule type" value="Genomic_DNA"/>
</dbReference>
<dbReference type="RefSeq" id="NP_743890.1">
    <property type="nucleotide sequence ID" value="NC_002947.4"/>
</dbReference>
<dbReference type="SMR" id="Q88M41"/>
<dbReference type="STRING" id="160488.PP_1734"/>
<dbReference type="PaxDb" id="160488-PP_1734"/>
<dbReference type="KEGG" id="ppu:PP_1734"/>
<dbReference type="PATRIC" id="fig|160488.4.peg.1828"/>
<dbReference type="eggNOG" id="COG0850">
    <property type="taxonomic scope" value="Bacteria"/>
</dbReference>
<dbReference type="HOGENOM" id="CLU_067812_0_1_6"/>
<dbReference type="OrthoDB" id="9794530at2"/>
<dbReference type="PhylomeDB" id="Q88M41"/>
<dbReference type="Proteomes" id="UP000000556">
    <property type="component" value="Chromosome"/>
</dbReference>
<dbReference type="GO" id="GO:0000902">
    <property type="term" value="P:cell morphogenesis"/>
    <property type="evidence" value="ECO:0007669"/>
    <property type="project" value="InterPro"/>
</dbReference>
<dbReference type="GO" id="GO:0000917">
    <property type="term" value="P:division septum assembly"/>
    <property type="evidence" value="ECO:0007669"/>
    <property type="project" value="UniProtKB-KW"/>
</dbReference>
<dbReference type="GO" id="GO:0051302">
    <property type="term" value="P:regulation of cell division"/>
    <property type="evidence" value="ECO:0007669"/>
    <property type="project" value="InterPro"/>
</dbReference>
<dbReference type="GO" id="GO:1901891">
    <property type="term" value="P:regulation of cell septum assembly"/>
    <property type="evidence" value="ECO:0007669"/>
    <property type="project" value="InterPro"/>
</dbReference>
<dbReference type="Gene3D" id="2.160.20.70">
    <property type="match status" value="1"/>
</dbReference>
<dbReference type="Gene3D" id="3.30.70.260">
    <property type="match status" value="1"/>
</dbReference>
<dbReference type="HAMAP" id="MF_00267">
    <property type="entry name" value="MinC"/>
    <property type="match status" value="1"/>
</dbReference>
<dbReference type="InterPro" id="IPR016098">
    <property type="entry name" value="CAP/MinC_C"/>
</dbReference>
<dbReference type="InterPro" id="IPR013033">
    <property type="entry name" value="MinC"/>
</dbReference>
<dbReference type="InterPro" id="IPR036145">
    <property type="entry name" value="MinC_C_sf"/>
</dbReference>
<dbReference type="InterPro" id="IPR007874">
    <property type="entry name" value="MinC_N"/>
</dbReference>
<dbReference type="InterPro" id="IPR005526">
    <property type="entry name" value="Septum_form_inhib_MinC_C"/>
</dbReference>
<dbReference type="NCBIfam" id="TIGR01222">
    <property type="entry name" value="minC"/>
    <property type="match status" value="1"/>
</dbReference>
<dbReference type="PANTHER" id="PTHR34108">
    <property type="entry name" value="SEPTUM SITE-DETERMINING PROTEIN MINC"/>
    <property type="match status" value="1"/>
</dbReference>
<dbReference type="PANTHER" id="PTHR34108:SF1">
    <property type="entry name" value="SEPTUM SITE-DETERMINING PROTEIN MINC"/>
    <property type="match status" value="1"/>
</dbReference>
<dbReference type="Pfam" id="PF03775">
    <property type="entry name" value="MinC_C"/>
    <property type="match status" value="1"/>
</dbReference>
<dbReference type="Pfam" id="PF05209">
    <property type="entry name" value="MinC_N"/>
    <property type="match status" value="1"/>
</dbReference>
<dbReference type="SUPFAM" id="SSF63848">
    <property type="entry name" value="Cell-division inhibitor MinC, C-terminal domain"/>
    <property type="match status" value="1"/>
</dbReference>